<name>TILS_BUCAP</name>
<gene>
    <name evidence="1" type="primary">tilS</name>
    <name type="synonym">mesJ</name>
    <name type="ordered locus">BUsg_103</name>
</gene>
<reference key="1">
    <citation type="journal article" date="2002" name="Science">
        <title>50 million years of genomic stasis in endosymbiotic bacteria.</title>
        <authorList>
            <person name="Tamas I."/>
            <person name="Klasson L."/>
            <person name="Canbaeck B."/>
            <person name="Naeslund A.K."/>
            <person name="Eriksson A.-S."/>
            <person name="Wernegreen J.J."/>
            <person name="Sandstroem J.P."/>
            <person name="Moran N.A."/>
            <person name="Andersson S.G.E."/>
        </authorList>
    </citation>
    <scope>NUCLEOTIDE SEQUENCE [LARGE SCALE GENOMIC DNA]</scope>
    <source>
        <strain>Sg</strain>
    </source>
</reference>
<feature type="chain" id="PRO_0000181665" description="tRNA(Ile)-lysidine synthase">
    <location>
        <begin position="1"/>
        <end position="445"/>
    </location>
</feature>
<feature type="binding site" evidence="1">
    <location>
        <begin position="19"/>
        <end position="24"/>
    </location>
    <ligand>
        <name>ATP</name>
        <dbReference type="ChEBI" id="CHEBI:30616"/>
    </ligand>
</feature>
<protein>
    <recommendedName>
        <fullName evidence="1">tRNA(Ile)-lysidine synthase</fullName>
        <ecNumber evidence="1">6.3.4.19</ecNumber>
    </recommendedName>
    <alternativeName>
        <fullName evidence="1">tRNA(Ile)-2-lysyl-cytidine synthase</fullName>
    </alternativeName>
    <alternativeName>
        <fullName evidence="1">tRNA(Ile)-lysidine synthetase</fullName>
    </alternativeName>
</protein>
<proteinExistence type="inferred from homology"/>
<dbReference type="EC" id="6.3.4.19" evidence="1"/>
<dbReference type="EMBL" id="AE013218">
    <property type="protein sequence ID" value="AAM67673.1"/>
    <property type="molecule type" value="Genomic_DNA"/>
</dbReference>
<dbReference type="RefSeq" id="WP_011053639.1">
    <property type="nucleotide sequence ID" value="NC_004061.1"/>
</dbReference>
<dbReference type="SMR" id="Q8KA23"/>
<dbReference type="STRING" id="198804.BUsg_103"/>
<dbReference type="GeneID" id="93003572"/>
<dbReference type="KEGG" id="bas:BUsg_103"/>
<dbReference type="eggNOG" id="COG0037">
    <property type="taxonomic scope" value="Bacteria"/>
</dbReference>
<dbReference type="HOGENOM" id="CLU_018869_2_0_6"/>
<dbReference type="Proteomes" id="UP000000416">
    <property type="component" value="Chromosome"/>
</dbReference>
<dbReference type="GO" id="GO:0005737">
    <property type="term" value="C:cytoplasm"/>
    <property type="evidence" value="ECO:0007669"/>
    <property type="project" value="UniProtKB-SubCell"/>
</dbReference>
<dbReference type="GO" id="GO:0005524">
    <property type="term" value="F:ATP binding"/>
    <property type="evidence" value="ECO:0007669"/>
    <property type="project" value="UniProtKB-UniRule"/>
</dbReference>
<dbReference type="GO" id="GO:0032267">
    <property type="term" value="F:tRNA(Ile)-lysidine synthase activity"/>
    <property type="evidence" value="ECO:0007669"/>
    <property type="project" value="UniProtKB-EC"/>
</dbReference>
<dbReference type="GO" id="GO:0006400">
    <property type="term" value="P:tRNA modification"/>
    <property type="evidence" value="ECO:0007669"/>
    <property type="project" value="UniProtKB-UniRule"/>
</dbReference>
<dbReference type="CDD" id="cd01992">
    <property type="entry name" value="TilS_N"/>
    <property type="match status" value="1"/>
</dbReference>
<dbReference type="Gene3D" id="1.20.59.20">
    <property type="match status" value="1"/>
</dbReference>
<dbReference type="Gene3D" id="3.40.50.620">
    <property type="entry name" value="HUPs"/>
    <property type="match status" value="1"/>
</dbReference>
<dbReference type="HAMAP" id="MF_01161">
    <property type="entry name" value="tRNA_Ile_lys_synt"/>
    <property type="match status" value="1"/>
</dbReference>
<dbReference type="InterPro" id="IPR012796">
    <property type="entry name" value="Lysidine-tRNA-synth_C"/>
</dbReference>
<dbReference type="InterPro" id="IPR014729">
    <property type="entry name" value="Rossmann-like_a/b/a_fold"/>
</dbReference>
<dbReference type="InterPro" id="IPR011063">
    <property type="entry name" value="TilS/TtcA_N"/>
</dbReference>
<dbReference type="InterPro" id="IPR012094">
    <property type="entry name" value="tRNA_Ile_lys_synt"/>
</dbReference>
<dbReference type="InterPro" id="IPR012795">
    <property type="entry name" value="tRNA_Ile_lys_synt_N"/>
</dbReference>
<dbReference type="InterPro" id="IPR015262">
    <property type="entry name" value="tRNA_Ile_lys_synt_subst-bd"/>
</dbReference>
<dbReference type="NCBIfam" id="TIGR02433">
    <property type="entry name" value="lysidine_TilS_C"/>
    <property type="match status" value="1"/>
</dbReference>
<dbReference type="NCBIfam" id="TIGR02432">
    <property type="entry name" value="lysidine_TilS_N"/>
    <property type="match status" value="1"/>
</dbReference>
<dbReference type="PANTHER" id="PTHR43033">
    <property type="entry name" value="TRNA(ILE)-LYSIDINE SYNTHASE-RELATED"/>
    <property type="match status" value="1"/>
</dbReference>
<dbReference type="PANTHER" id="PTHR43033:SF1">
    <property type="entry name" value="TRNA(ILE)-LYSIDINE SYNTHASE-RELATED"/>
    <property type="match status" value="1"/>
</dbReference>
<dbReference type="Pfam" id="PF01171">
    <property type="entry name" value="ATP_bind_3"/>
    <property type="match status" value="1"/>
</dbReference>
<dbReference type="Pfam" id="PF09179">
    <property type="entry name" value="TilS"/>
    <property type="match status" value="1"/>
</dbReference>
<dbReference type="Pfam" id="PF11734">
    <property type="entry name" value="TilS_C"/>
    <property type="match status" value="1"/>
</dbReference>
<dbReference type="SMART" id="SM00977">
    <property type="entry name" value="TilS_C"/>
    <property type="match status" value="1"/>
</dbReference>
<dbReference type="SUPFAM" id="SSF52402">
    <property type="entry name" value="Adenine nucleotide alpha hydrolases-like"/>
    <property type="match status" value="1"/>
</dbReference>
<dbReference type="SUPFAM" id="SSF82829">
    <property type="entry name" value="MesJ substrate recognition domain-like"/>
    <property type="match status" value="1"/>
</dbReference>
<dbReference type="SUPFAM" id="SSF56037">
    <property type="entry name" value="PheT/TilS domain"/>
    <property type="match status" value="1"/>
</dbReference>
<sequence>MIEKIINQYQKKLFLIAYSGGIDSTVLLYKMLKIKEKNPQIKIRAIHINHNLHPSSKKWEEHCIKICHKYKIPIITKEIKILLKKNIEETLRIKRYNTIYNYLLNDEILLTGHHLNDQCETLFLSLKRGSGPTGLSGMSIENFLGKKRIVRPFLTKTKKELQKWACENNLESIEDFSNFNIDYDRNFIRHKLIPILEQRWPFFLKNCFRTTVICREETKLKNIFLKEKIQNLINFDESLNIQNFKNINKEVCKALIRYWISLKNIKMPSYKTIECIYNEIICSKKDSNPKIIIDKNEIRRYKTSLYFIKIQKDISNIFLFWHNTDKKLLLPEDLGYLIKNDKGFILPSPKKNELINIRFQLEGKILILGREKRRKIKKIWQEHNIPPWLRNKIPLLFYNNRFISAIGLFVIKEKIINKEKEIQKNWKISWINNVHFNRKNFFLFY</sequence>
<organism>
    <name type="scientific">Buchnera aphidicola subsp. Schizaphis graminum (strain Sg)</name>
    <dbReference type="NCBI Taxonomy" id="198804"/>
    <lineage>
        <taxon>Bacteria</taxon>
        <taxon>Pseudomonadati</taxon>
        <taxon>Pseudomonadota</taxon>
        <taxon>Gammaproteobacteria</taxon>
        <taxon>Enterobacterales</taxon>
        <taxon>Erwiniaceae</taxon>
        <taxon>Buchnera</taxon>
    </lineage>
</organism>
<evidence type="ECO:0000255" key="1">
    <source>
        <dbReference type="HAMAP-Rule" id="MF_01161"/>
    </source>
</evidence>
<keyword id="KW-0067">ATP-binding</keyword>
<keyword id="KW-0963">Cytoplasm</keyword>
<keyword id="KW-0436">Ligase</keyword>
<keyword id="KW-0547">Nucleotide-binding</keyword>
<keyword id="KW-0819">tRNA processing</keyword>
<accession>Q8KA23</accession>
<comment type="function">
    <text evidence="1">Ligates lysine onto the cytidine present at position 34 of the AUA codon-specific tRNA(Ile) that contains the anticodon CAU, in an ATP-dependent manner. Cytidine is converted to lysidine, thus changing the amino acid specificity of the tRNA from methionine to isoleucine.</text>
</comment>
<comment type="catalytic activity">
    <reaction evidence="1">
        <text>cytidine(34) in tRNA(Ile2) + L-lysine + ATP = lysidine(34) in tRNA(Ile2) + AMP + diphosphate + H(+)</text>
        <dbReference type="Rhea" id="RHEA:43744"/>
        <dbReference type="Rhea" id="RHEA-COMP:10625"/>
        <dbReference type="Rhea" id="RHEA-COMP:10670"/>
        <dbReference type="ChEBI" id="CHEBI:15378"/>
        <dbReference type="ChEBI" id="CHEBI:30616"/>
        <dbReference type="ChEBI" id="CHEBI:32551"/>
        <dbReference type="ChEBI" id="CHEBI:33019"/>
        <dbReference type="ChEBI" id="CHEBI:82748"/>
        <dbReference type="ChEBI" id="CHEBI:83665"/>
        <dbReference type="ChEBI" id="CHEBI:456215"/>
        <dbReference type="EC" id="6.3.4.19"/>
    </reaction>
</comment>
<comment type="subcellular location">
    <subcellularLocation>
        <location evidence="1">Cytoplasm</location>
    </subcellularLocation>
</comment>
<comment type="domain">
    <text>The N-terminal region contains the highly conserved SGGXDS motif, predicted to be a P-loop motif involved in ATP binding.</text>
</comment>
<comment type="similarity">
    <text evidence="1">Belongs to the tRNA(Ile)-lysidine synthase family.</text>
</comment>